<accession>B7HJ72</accession>
<proteinExistence type="inferred from homology"/>
<keyword id="KW-0687">Ribonucleoprotein</keyword>
<keyword id="KW-0689">Ribosomal protein</keyword>
<comment type="similarity">
    <text evidence="1">Belongs to the bacterial ribosomal protein bL36 family.</text>
</comment>
<gene>
    <name evidence="1" type="primary">rpmJ</name>
    <name type="ordered locus">BCB4264_A0155</name>
</gene>
<protein>
    <recommendedName>
        <fullName evidence="1">Large ribosomal subunit protein bL36</fullName>
    </recommendedName>
    <alternativeName>
        <fullName evidence="2">50S ribosomal protein L36</fullName>
    </alternativeName>
</protein>
<name>RL36_BACC4</name>
<sequence length="37" mass="4333">MKVRPSVKPICEKCKVIRRRGKVMVICENPKHKQKQG</sequence>
<organism>
    <name type="scientific">Bacillus cereus (strain B4264)</name>
    <dbReference type="NCBI Taxonomy" id="405532"/>
    <lineage>
        <taxon>Bacteria</taxon>
        <taxon>Bacillati</taxon>
        <taxon>Bacillota</taxon>
        <taxon>Bacilli</taxon>
        <taxon>Bacillales</taxon>
        <taxon>Bacillaceae</taxon>
        <taxon>Bacillus</taxon>
        <taxon>Bacillus cereus group</taxon>
    </lineage>
</organism>
<dbReference type="EMBL" id="CP001176">
    <property type="protein sequence ID" value="ACK61119.1"/>
    <property type="molecule type" value="Genomic_DNA"/>
</dbReference>
<dbReference type="RefSeq" id="WP_000868344.1">
    <property type="nucleotide sequence ID" value="NZ_VEHB01000017.1"/>
</dbReference>
<dbReference type="SMR" id="B7HJ72"/>
<dbReference type="GeneID" id="97822099"/>
<dbReference type="KEGG" id="bcb:BCB4264_A0155"/>
<dbReference type="HOGENOM" id="CLU_135723_6_2_9"/>
<dbReference type="Proteomes" id="UP000007096">
    <property type="component" value="Chromosome"/>
</dbReference>
<dbReference type="GO" id="GO:0005737">
    <property type="term" value="C:cytoplasm"/>
    <property type="evidence" value="ECO:0007669"/>
    <property type="project" value="UniProtKB-ARBA"/>
</dbReference>
<dbReference type="GO" id="GO:1990904">
    <property type="term" value="C:ribonucleoprotein complex"/>
    <property type="evidence" value="ECO:0007669"/>
    <property type="project" value="UniProtKB-KW"/>
</dbReference>
<dbReference type="GO" id="GO:0005840">
    <property type="term" value="C:ribosome"/>
    <property type="evidence" value="ECO:0007669"/>
    <property type="project" value="UniProtKB-KW"/>
</dbReference>
<dbReference type="GO" id="GO:0003735">
    <property type="term" value="F:structural constituent of ribosome"/>
    <property type="evidence" value="ECO:0007669"/>
    <property type="project" value="InterPro"/>
</dbReference>
<dbReference type="GO" id="GO:0006412">
    <property type="term" value="P:translation"/>
    <property type="evidence" value="ECO:0007669"/>
    <property type="project" value="UniProtKB-UniRule"/>
</dbReference>
<dbReference type="HAMAP" id="MF_00251">
    <property type="entry name" value="Ribosomal_bL36"/>
    <property type="match status" value="1"/>
</dbReference>
<dbReference type="InterPro" id="IPR000473">
    <property type="entry name" value="Ribosomal_bL36"/>
</dbReference>
<dbReference type="InterPro" id="IPR035977">
    <property type="entry name" value="Ribosomal_bL36_sp"/>
</dbReference>
<dbReference type="NCBIfam" id="TIGR01022">
    <property type="entry name" value="rpmJ_bact"/>
    <property type="match status" value="1"/>
</dbReference>
<dbReference type="PANTHER" id="PTHR42888">
    <property type="entry name" value="50S RIBOSOMAL PROTEIN L36, CHLOROPLASTIC"/>
    <property type="match status" value="1"/>
</dbReference>
<dbReference type="PANTHER" id="PTHR42888:SF1">
    <property type="entry name" value="LARGE RIBOSOMAL SUBUNIT PROTEIN BL36C"/>
    <property type="match status" value="1"/>
</dbReference>
<dbReference type="Pfam" id="PF00444">
    <property type="entry name" value="Ribosomal_L36"/>
    <property type="match status" value="1"/>
</dbReference>
<dbReference type="SUPFAM" id="SSF57840">
    <property type="entry name" value="Ribosomal protein L36"/>
    <property type="match status" value="1"/>
</dbReference>
<dbReference type="PROSITE" id="PS00828">
    <property type="entry name" value="RIBOSOMAL_L36"/>
    <property type="match status" value="1"/>
</dbReference>
<feature type="chain" id="PRO_1000196166" description="Large ribosomal subunit protein bL36">
    <location>
        <begin position="1"/>
        <end position="37"/>
    </location>
</feature>
<evidence type="ECO:0000255" key="1">
    <source>
        <dbReference type="HAMAP-Rule" id="MF_00251"/>
    </source>
</evidence>
<evidence type="ECO:0000305" key="2"/>
<reference key="1">
    <citation type="submission" date="2008-10" db="EMBL/GenBank/DDBJ databases">
        <title>Genome sequence of Bacillus cereus B4264.</title>
        <authorList>
            <person name="Dodson R.J."/>
            <person name="Durkin A.S."/>
            <person name="Rosovitz M.J."/>
            <person name="Rasko D.A."/>
            <person name="Hoffmaster A."/>
            <person name="Ravel J."/>
            <person name="Sutton G."/>
        </authorList>
    </citation>
    <scope>NUCLEOTIDE SEQUENCE [LARGE SCALE GENOMIC DNA]</scope>
    <source>
        <strain>B4264</strain>
    </source>
</reference>